<organism>
    <name type="scientific">Borrelia turicatae (strain 91E135)</name>
    <dbReference type="NCBI Taxonomy" id="314724"/>
    <lineage>
        <taxon>Bacteria</taxon>
        <taxon>Pseudomonadati</taxon>
        <taxon>Spirochaetota</taxon>
        <taxon>Spirochaetia</taxon>
        <taxon>Spirochaetales</taxon>
        <taxon>Borreliaceae</taxon>
        <taxon>Borrelia</taxon>
    </lineage>
</organism>
<reference key="1">
    <citation type="submission" date="2004-12" db="EMBL/GenBank/DDBJ databases">
        <title>The genome sequence of Borrelia hermsii and Borrelia turicatae: comparative analysis of two agents of endemic N. America relapsing fever.</title>
        <authorList>
            <person name="Porcella S.F."/>
            <person name="Raffel S.J."/>
            <person name="Schrumpf M.E."/>
            <person name="Montgomery B."/>
            <person name="Smith T."/>
            <person name="Schwan T.G."/>
        </authorList>
    </citation>
    <scope>NUCLEOTIDE SEQUENCE [LARGE SCALE GENOMIC DNA]</scope>
    <source>
        <strain>91E135</strain>
    </source>
</reference>
<comment type="function">
    <text evidence="1">Aspartyl-tRNA synthetase with relaxed tRNA specificity since it is able to aspartylate not only its cognate tRNA(Asp) but also tRNA(Asn). Reaction proceeds in two steps: L-aspartate is first activated by ATP to form Asp-AMP and then transferred to the acceptor end of tRNA(Asp/Asn).</text>
</comment>
<comment type="catalytic activity">
    <reaction evidence="1">
        <text>tRNA(Asx) + L-aspartate + ATP = L-aspartyl-tRNA(Asx) + AMP + diphosphate</text>
        <dbReference type="Rhea" id="RHEA:18349"/>
        <dbReference type="Rhea" id="RHEA-COMP:9710"/>
        <dbReference type="Rhea" id="RHEA-COMP:9711"/>
        <dbReference type="ChEBI" id="CHEBI:29991"/>
        <dbReference type="ChEBI" id="CHEBI:30616"/>
        <dbReference type="ChEBI" id="CHEBI:33019"/>
        <dbReference type="ChEBI" id="CHEBI:78442"/>
        <dbReference type="ChEBI" id="CHEBI:78516"/>
        <dbReference type="ChEBI" id="CHEBI:456215"/>
        <dbReference type="EC" id="6.1.1.23"/>
    </reaction>
</comment>
<comment type="subunit">
    <text evidence="1">Homodimer.</text>
</comment>
<comment type="subcellular location">
    <subcellularLocation>
        <location evidence="1">Cytoplasm</location>
    </subcellularLocation>
</comment>
<comment type="similarity">
    <text evidence="1">Belongs to the class-II aminoacyl-tRNA synthetase family. Type 1 subfamily.</text>
</comment>
<dbReference type="EC" id="6.1.1.23" evidence="1"/>
<dbReference type="EMBL" id="CP000049">
    <property type="protein sequence ID" value="AAX17775.1"/>
    <property type="molecule type" value="Genomic_DNA"/>
</dbReference>
<dbReference type="RefSeq" id="WP_011772394.1">
    <property type="nucleotide sequence ID" value="NC_008710.1"/>
</dbReference>
<dbReference type="SMR" id="A1QZN3"/>
<dbReference type="KEGG" id="btu:BT0446"/>
<dbReference type="eggNOG" id="COG0173">
    <property type="taxonomic scope" value="Bacteria"/>
</dbReference>
<dbReference type="HOGENOM" id="CLU_014330_3_2_12"/>
<dbReference type="Proteomes" id="UP000001205">
    <property type="component" value="Chromosome"/>
</dbReference>
<dbReference type="GO" id="GO:0005737">
    <property type="term" value="C:cytoplasm"/>
    <property type="evidence" value="ECO:0007669"/>
    <property type="project" value="UniProtKB-SubCell"/>
</dbReference>
<dbReference type="GO" id="GO:0004815">
    <property type="term" value="F:aspartate-tRNA ligase activity"/>
    <property type="evidence" value="ECO:0007669"/>
    <property type="project" value="UniProtKB-UniRule"/>
</dbReference>
<dbReference type="GO" id="GO:0050560">
    <property type="term" value="F:aspartate-tRNA(Asn) ligase activity"/>
    <property type="evidence" value="ECO:0007669"/>
    <property type="project" value="UniProtKB-EC"/>
</dbReference>
<dbReference type="GO" id="GO:0005524">
    <property type="term" value="F:ATP binding"/>
    <property type="evidence" value="ECO:0007669"/>
    <property type="project" value="UniProtKB-UniRule"/>
</dbReference>
<dbReference type="GO" id="GO:0003676">
    <property type="term" value="F:nucleic acid binding"/>
    <property type="evidence" value="ECO:0007669"/>
    <property type="project" value="InterPro"/>
</dbReference>
<dbReference type="GO" id="GO:0006422">
    <property type="term" value="P:aspartyl-tRNA aminoacylation"/>
    <property type="evidence" value="ECO:0007669"/>
    <property type="project" value="UniProtKB-UniRule"/>
</dbReference>
<dbReference type="CDD" id="cd00777">
    <property type="entry name" value="AspRS_core"/>
    <property type="match status" value="1"/>
</dbReference>
<dbReference type="CDD" id="cd04317">
    <property type="entry name" value="EcAspRS_like_N"/>
    <property type="match status" value="1"/>
</dbReference>
<dbReference type="Gene3D" id="3.30.930.10">
    <property type="entry name" value="Bira Bifunctional Protein, Domain 2"/>
    <property type="match status" value="1"/>
</dbReference>
<dbReference type="Gene3D" id="3.30.1360.30">
    <property type="entry name" value="GAD-like domain"/>
    <property type="match status" value="1"/>
</dbReference>
<dbReference type="Gene3D" id="2.40.50.140">
    <property type="entry name" value="Nucleic acid-binding proteins"/>
    <property type="match status" value="1"/>
</dbReference>
<dbReference type="HAMAP" id="MF_00044">
    <property type="entry name" value="Asp_tRNA_synth_type1"/>
    <property type="match status" value="1"/>
</dbReference>
<dbReference type="InterPro" id="IPR004364">
    <property type="entry name" value="Aa-tRNA-synt_II"/>
</dbReference>
<dbReference type="InterPro" id="IPR006195">
    <property type="entry name" value="aa-tRNA-synth_II"/>
</dbReference>
<dbReference type="InterPro" id="IPR045864">
    <property type="entry name" value="aa-tRNA-synth_II/BPL/LPL"/>
</dbReference>
<dbReference type="InterPro" id="IPR004524">
    <property type="entry name" value="Asp-tRNA-ligase_1"/>
</dbReference>
<dbReference type="InterPro" id="IPR047089">
    <property type="entry name" value="Asp-tRNA-ligase_1_N"/>
</dbReference>
<dbReference type="InterPro" id="IPR002312">
    <property type="entry name" value="Asp/Asn-tRNA-synth_IIb"/>
</dbReference>
<dbReference type="InterPro" id="IPR047090">
    <property type="entry name" value="AspRS_core"/>
</dbReference>
<dbReference type="InterPro" id="IPR004115">
    <property type="entry name" value="GAD-like_sf"/>
</dbReference>
<dbReference type="InterPro" id="IPR029351">
    <property type="entry name" value="GAD_dom"/>
</dbReference>
<dbReference type="InterPro" id="IPR012340">
    <property type="entry name" value="NA-bd_OB-fold"/>
</dbReference>
<dbReference type="InterPro" id="IPR004365">
    <property type="entry name" value="NA-bd_OB_tRNA"/>
</dbReference>
<dbReference type="NCBIfam" id="TIGR00459">
    <property type="entry name" value="aspS_bact"/>
    <property type="match status" value="1"/>
</dbReference>
<dbReference type="NCBIfam" id="NF001750">
    <property type="entry name" value="PRK00476.1"/>
    <property type="match status" value="1"/>
</dbReference>
<dbReference type="PANTHER" id="PTHR22594:SF5">
    <property type="entry name" value="ASPARTATE--TRNA LIGASE, MITOCHONDRIAL"/>
    <property type="match status" value="1"/>
</dbReference>
<dbReference type="PANTHER" id="PTHR22594">
    <property type="entry name" value="ASPARTYL/LYSYL-TRNA SYNTHETASE"/>
    <property type="match status" value="1"/>
</dbReference>
<dbReference type="Pfam" id="PF02938">
    <property type="entry name" value="GAD"/>
    <property type="match status" value="1"/>
</dbReference>
<dbReference type="Pfam" id="PF00152">
    <property type="entry name" value="tRNA-synt_2"/>
    <property type="match status" value="1"/>
</dbReference>
<dbReference type="Pfam" id="PF01336">
    <property type="entry name" value="tRNA_anti-codon"/>
    <property type="match status" value="1"/>
</dbReference>
<dbReference type="PRINTS" id="PR01042">
    <property type="entry name" value="TRNASYNTHASP"/>
</dbReference>
<dbReference type="SUPFAM" id="SSF55681">
    <property type="entry name" value="Class II aaRS and biotin synthetases"/>
    <property type="match status" value="1"/>
</dbReference>
<dbReference type="SUPFAM" id="SSF55261">
    <property type="entry name" value="GAD domain-like"/>
    <property type="match status" value="1"/>
</dbReference>
<dbReference type="SUPFAM" id="SSF50249">
    <property type="entry name" value="Nucleic acid-binding proteins"/>
    <property type="match status" value="1"/>
</dbReference>
<dbReference type="PROSITE" id="PS50862">
    <property type="entry name" value="AA_TRNA_LIGASE_II"/>
    <property type="match status" value="1"/>
</dbReference>
<sequence length="585" mass="68356">MFKTIKCNQINDKLINQKIEINAWVKKIRHHGKVTFINLRDRYDEAQVLVNDEKLLKITSQIKMEYCIKVQGKLELRPSNLVNKEMRTGAFEILAENINIISRCNELPFMIEDNNNANENAKLEYRYLDLRREEQKQKIILRSKVTHTIRNYLTKKDFLELETPTFVKSTPEGARDFLVPSRIHKGHFYALPQSPQIYKQLTMIAGLDKYFQIARCYRDEDSRGDRQPEFTQLDIEMSFIKKENIFKLMENLIFTIFKNTLNISLPKKFKRMTYKHAMNTYGSDKPDTRYELLIQDMGKYFKQSSFNVFKDILQNKGTIKALIIKNQAHNFSRSKINNLEEHAKIYKTSGLYFAKIENNEFVGGIAKFLNKIKQTLFQTYSLKNNDIIFFIADSWETACKAMGQIRIKIANELNLTNKNTFEFLWIYDFPLFEYDEDTKNYKAAHHMFSLPQQKYIDTLESNPSKVLGEVYDLVLNGMELGSGSIRVHTRELQQRIFNIVGFKDTIAEERFGFFLKALEYGAPIHGGIAIGIDRLLMIMTHSSSIKDVILFPKNSFAASPLDKAPSKVPNEQLRELNLTIEDYKN</sequence>
<protein>
    <recommendedName>
        <fullName evidence="1">Aspartate--tRNA(Asp/Asn) ligase</fullName>
        <ecNumber evidence="1">6.1.1.23</ecNumber>
    </recommendedName>
    <alternativeName>
        <fullName evidence="1">Aspartyl-tRNA synthetase</fullName>
        <shortName evidence="1">AspRS</shortName>
    </alternativeName>
    <alternativeName>
        <fullName evidence="1">Non-discriminating aspartyl-tRNA synthetase</fullName>
        <shortName evidence="1">ND-AspRS</shortName>
    </alternativeName>
</protein>
<accession>A1QZN3</accession>
<evidence type="ECO:0000255" key="1">
    <source>
        <dbReference type="HAMAP-Rule" id="MF_00044"/>
    </source>
</evidence>
<proteinExistence type="inferred from homology"/>
<keyword id="KW-0030">Aminoacyl-tRNA synthetase</keyword>
<keyword id="KW-0067">ATP-binding</keyword>
<keyword id="KW-0963">Cytoplasm</keyword>
<keyword id="KW-0436">Ligase</keyword>
<keyword id="KW-0547">Nucleotide-binding</keyword>
<keyword id="KW-0648">Protein biosynthesis</keyword>
<keyword id="KW-1185">Reference proteome</keyword>
<name>SYDND_BORT9</name>
<feature type="chain" id="PRO_1000198964" description="Aspartate--tRNA(Asp/Asn) ligase">
    <location>
        <begin position="1"/>
        <end position="585"/>
    </location>
</feature>
<feature type="region of interest" description="Aspartate" evidence="1">
    <location>
        <begin position="196"/>
        <end position="199"/>
    </location>
</feature>
<feature type="binding site" evidence="1">
    <location>
        <position position="172"/>
    </location>
    <ligand>
        <name>L-aspartate</name>
        <dbReference type="ChEBI" id="CHEBI:29991"/>
    </ligand>
</feature>
<feature type="binding site" evidence="1">
    <location>
        <begin position="218"/>
        <end position="220"/>
    </location>
    <ligand>
        <name>ATP</name>
        <dbReference type="ChEBI" id="CHEBI:30616"/>
    </ligand>
</feature>
<feature type="binding site" evidence="1">
    <location>
        <position position="218"/>
    </location>
    <ligand>
        <name>L-aspartate</name>
        <dbReference type="ChEBI" id="CHEBI:29991"/>
    </ligand>
</feature>
<feature type="binding site" evidence="1">
    <location>
        <position position="227"/>
    </location>
    <ligand>
        <name>ATP</name>
        <dbReference type="ChEBI" id="CHEBI:30616"/>
    </ligand>
</feature>
<feature type="binding site" evidence="1">
    <location>
        <position position="445"/>
    </location>
    <ligand>
        <name>L-aspartate</name>
        <dbReference type="ChEBI" id="CHEBI:29991"/>
    </ligand>
</feature>
<feature type="binding site" evidence="1">
    <location>
        <position position="479"/>
    </location>
    <ligand>
        <name>ATP</name>
        <dbReference type="ChEBI" id="CHEBI:30616"/>
    </ligand>
</feature>
<feature type="binding site" evidence="1">
    <location>
        <position position="486"/>
    </location>
    <ligand>
        <name>L-aspartate</name>
        <dbReference type="ChEBI" id="CHEBI:29991"/>
    </ligand>
</feature>
<feature type="binding site" evidence="1">
    <location>
        <begin position="531"/>
        <end position="534"/>
    </location>
    <ligand>
        <name>ATP</name>
        <dbReference type="ChEBI" id="CHEBI:30616"/>
    </ligand>
</feature>
<feature type="site" description="Important for tRNA non-discrimination" evidence="1">
    <location>
        <position position="31"/>
    </location>
</feature>
<gene>
    <name evidence="1" type="primary">aspS</name>
    <name type="ordered locus">BT0446</name>
</gene>